<name>YJX1_SCHPO</name>
<reference key="1">
    <citation type="journal article" date="2002" name="Nature">
        <title>The genome sequence of Schizosaccharomyces pombe.</title>
        <authorList>
            <person name="Wood V."/>
            <person name="Gwilliam R."/>
            <person name="Rajandream M.A."/>
            <person name="Lyne M.H."/>
            <person name="Lyne R."/>
            <person name="Stewart A."/>
            <person name="Sgouros J.G."/>
            <person name="Peat N."/>
            <person name="Hayles J."/>
            <person name="Baker S.G."/>
            <person name="Basham D."/>
            <person name="Bowman S."/>
            <person name="Brooks K."/>
            <person name="Brown D."/>
            <person name="Brown S."/>
            <person name="Chillingworth T."/>
            <person name="Churcher C.M."/>
            <person name="Collins M."/>
            <person name="Connor R."/>
            <person name="Cronin A."/>
            <person name="Davis P."/>
            <person name="Feltwell T."/>
            <person name="Fraser A."/>
            <person name="Gentles S."/>
            <person name="Goble A."/>
            <person name="Hamlin N."/>
            <person name="Harris D.E."/>
            <person name="Hidalgo J."/>
            <person name="Hodgson G."/>
            <person name="Holroyd S."/>
            <person name="Hornsby T."/>
            <person name="Howarth S."/>
            <person name="Huckle E.J."/>
            <person name="Hunt S."/>
            <person name="Jagels K."/>
            <person name="James K.D."/>
            <person name="Jones L."/>
            <person name="Jones M."/>
            <person name="Leather S."/>
            <person name="McDonald S."/>
            <person name="McLean J."/>
            <person name="Mooney P."/>
            <person name="Moule S."/>
            <person name="Mungall K.L."/>
            <person name="Murphy L.D."/>
            <person name="Niblett D."/>
            <person name="Odell C."/>
            <person name="Oliver K."/>
            <person name="O'Neil S."/>
            <person name="Pearson D."/>
            <person name="Quail M.A."/>
            <person name="Rabbinowitsch E."/>
            <person name="Rutherford K.M."/>
            <person name="Rutter S."/>
            <person name="Saunders D."/>
            <person name="Seeger K."/>
            <person name="Sharp S."/>
            <person name="Skelton J."/>
            <person name="Simmonds M.N."/>
            <person name="Squares R."/>
            <person name="Squares S."/>
            <person name="Stevens K."/>
            <person name="Taylor K."/>
            <person name="Taylor R.G."/>
            <person name="Tivey A."/>
            <person name="Walsh S.V."/>
            <person name="Warren T."/>
            <person name="Whitehead S."/>
            <person name="Woodward J.R."/>
            <person name="Volckaert G."/>
            <person name="Aert R."/>
            <person name="Robben J."/>
            <person name="Grymonprez B."/>
            <person name="Weltjens I."/>
            <person name="Vanstreels E."/>
            <person name="Rieger M."/>
            <person name="Schaefer M."/>
            <person name="Mueller-Auer S."/>
            <person name="Gabel C."/>
            <person name="Fuchs M."/>
            <person name="Duesterhoeft A."/>
            <person name="Fritzc C."/>
            <person name="Holzer E."/>
            <person name="Moestl D."/>
            <person name="Hilbert H."/>
            <person name="Borzym K."/>
            <person name="Langer I."/>
            <person name="Beck A."/>
            <person name="Lehrach H."/>
            <person name="Reinhardt R."/>
            <person name="Pohl T.M."/>
            <person name="Eger P."/>
            <person name="Zimmermann W."/>
            <person name="Wedler H."/>
            <person name="Wambutt R."/>
            <person name="Purnelle B."/>
            <person name="Goffeau A."/>
            <person name="Cadieu E."/>
            <person name="Dreano S."/>
            <person name="Gloux S."/>
            <person name="Lelaure V."/>
            <person name="Mottier S."/>
            <person name="Galibert F."/>
            <person name="Aves S.J."/>
            <person name="Xiang Z."/>
            <person name="Hunt C."/>
            <person name="Moore K."/>
            <person name="Hurst S.M."/>
            <person name="Lucas M."/>
            <person name="Rochet M."/>
            <person name="Gaillardin C."/>
            <person name="Tallada V.A."/>
            <person name="Garzon A."/>
            <person name="Thode G."/>
            <person name="Daga R.R."/>
            <person name="Cruzado L."/>
            <person name="Jimenez J."/>
            <person name="Sanchez M."/>
            <person name="del Rey F."/>
            <person name="Benito J."/>
            <person name="Dominguez A."/>
            <person name="Revuelta J.L."/>
            <person name="Moreno S."/>
            <person name="Armstrong J."/>
            <person name="Forsburg S.L."/>
            <person name="Cerutti L."/>
            <person name="Lowe T."/>
            <person name="McCombie W.R."/>
            <person name="Paulsen I."/>
            <person name="Potashkin J."/>
            <person name="Shpakovski G.V."/>
            <person name="Ussery D."/>
            <person name="Barrell B.G."/>
            <person name="Nurse P."/>
        </authorList>
    </citation>
    <scope>NUCLEOTIDE SEQUENCE [LARGE SCALE GENOMIC DNA]</scope>
    <source>
        <strain>972 / ATCC 24843</strain>
    </source>
</reference>
<reference key="2">
    <citation type="journal article" date="2011" name="Science">
        <title>Comparative functional genomics of the fission yeasts.</title>
        <authorList>
            <person name="Rhind N."/>
            <person name="Chen Z."/>
            <person name="Yassour M."/>
            <person name="Thompson D.A."/>
            <person name="Haas B.J."/>
            <person name="Habib N."/>
            <person name="Wapinski I."/>
            <person name="Roy S."/>
            <person name="Lin M.F."/>
            <person name="Heiman D.I."/>
            <person name="Young S.K."/>
            <person name="Furuya K."/>
            <person name="Guo Y."/>
            <person name="Pidoux A."/>
            <person name="Chen H.M."/>
            <person name="Robbertse B."/>
            <person name="Goldberg J.M."/>
            <person name="Aoki K."/>
            <person name="Bayne E.H."/>
            <person name="Berlin A.M."/>
            <person name="Desjardins C.A."/>
            <person name="Dobbs E."/>
            <person name="Dukaj L."/>
            <person name="Fan L."/>
            <person name="FitzGerald M.G."/>
            <person name="French C."/>
            <person name="Gujja S."/>
            <person name="Hansen K."/>
            <person name="Keifenheim D."/>
            <person name="Levin J.Z."/>
            <person name="Mosher R.A."/>
            <person name="Mueller C.A."/>
            <person name="Pfiffner J."/>
            <person name="Priest M."/>
            <person name="Russ C."/>
            <person name="Smialowska A."/>
            <person name="Swoboda P."/>
            <person name="Sykes S.M."/>
            <person name="Vaughn M."/>
            <person name="Vengrova S."/>
            <person name="Yoder R."/>
            <person name="Zeng Q."/>
            <person name="Allshire R."/>
            <person name="Baulcombe D."/>
            <person name="Birren B.W."/>
            <person name="Brown W."/>
            <person name="Ekwall K."/>
            <person name="Kellis M."/>
            <person name="Leatherwood J."/>
            <person name="Levin H."/>
            <person name="Margalit H."/>
            <person name="Martienssen R."/>
            <person name="Nieduszynski C.A."/>
            <person name="Spatafora J.W."/>
            <person name="Friedman N."/>
            <person name="Dalgaard J.Z."/>
            <person name="Baumann P."/>
            <person name="Niki H."/>
            <person name="Regev A."/>
            <person name="Nusbaum C."/>
        </authorList>
    </citation>
    <scope>REVISION OF GENE MODEL</scope>
</reference>
<reference key="3">
    <citation type="journal article" date="2006" name="Nat. Biotechnol.">
        <title>ORFeome cloning and global analysis of protein localization in the fission yeast Schizosaccharomyces pombe.</title>
        <authorList>
            <person name="Matsuyama A."/>
            <person name="Arai R."/>
            <person name="Yashiroda Y."/>
            <person name="Shirai A."/>
            <person name="Kamata A."/>
            <person name="Sekido S."/>
            <person name="Kobayashi Y."/>
            <person name="Hashimoto A."/>
            <person name="Hamamoto M."/>
            <person name="Hiraoka Y."/>
            <person name="Horinouchi S."/>
            <person name="Yoshida M."/>
        </authorList>
    </citation>
    <scope>SUBCELLULAR LOCATION [LARGE SCALE ANALYSIS]</scope>
</reference>
<reference key="4">
    <citation type="journal article" date="2008" name="J. Proteome Res.">
        <title>Phosphoproteome analysis of fission yeast.</title>
        <authorList>
            <person name="Wilson-Grady J.T."/>
            <person name="Villen J."/>
            <person name="Gygi S.P."/>
        </authorList>
    </citation>
    <scope>PHOSPHORYLATION [LARGE SCALE ANALYSIS] AT SER-328; SER-408; SER-409 AND SER-421</scope>
    <scope>IDENTIFICATION BY MASS SPECTROMETRY</scope>
</reference>
<accession>Q9UUA1</accession>
<gene>
    <name type="ORF">SPCC23B6.01c</name>
</gene>
<feature type="chain" id="PRO_0000315947" description="Oxysterol-binding protein homolog C23B6.01c">
    <location>
        <begin position="1"/>
        <end position="479"/>
    </location>
</feature>
<feature type="region of interest" description="Disordered" evidence="1">
    <location>
        <begin position="404"/>
        <end position="479"/>
    </location>
</feature>
<feature type="compositionally biased region" description="Basic and acidic residues" evidence="1">
    <location>
        <begin position="404"/>
        <end position="418"/>
    </location>
</feature>
<feature type="compositionally biased region" description="Polar residues" evidence="1">
    <location>
        <begin position="439"/>
        <end position="452"/>
    </location>
</feature>
<feature type="compositionally biased region" description="Basic and acidic residues" evidence="1">
    <location>
        <begin position="470"/>
        <end position="479"/>
    </location>
</feature>
<feature type="modified residue" description="Phosphoserine" evidence="3">
    <location>
        <position position="328"/>
    </location>
</feature>
<feature type="modified residue" description="Phosphoserine" evidence="3">
    <location>
        <position position="408"/>
    </location>
</feature>
<feature type="modified residue" description="Phosphoserine" evidence="3">
    <location>
        <position position="409"/>
    </location>
</feature>
<feature type="modified residue" description="Phosphoserine" evidence="3">
    <location>
        <position position="421"/>
    </location>
</feature>
<dbReference type="EMBL" id="CU329672">
    <property type="protein sequence ID" value="CAB51560.2"/>
    <property type="molecule type" value="Genomic_DNA"/>
</dbReference>
<dbReference type="PIR" id="T41241">
    <property type="entry name" value="T41241"/>
</dbReference>
<dbReference type="SMR" id="Q9UUA1"/>
<dbReference type="BioGRID" id="275836">
    <property type="interactions" value="4"/>
</dbReference>
<dbReference type="FunCoup" id="Q9UUA1">
    <property type="interactions" value="506"/>
</dbReference>
<dbReference type="STRING" id="284812.Q9UUA1"/>
<dbReference type="iPTMnet" id="Q9UUA1"/>
<dbReference type="PaxDb" id="4896-SPCC23B6.01c.1"/>
<dbReference type="EnsemblFungi" id="SPCC23B6.01c.1">
    <property type="protein sequence ID" value="SPCC23B6.01c.1:pep"/>
    <property type="gene ID" value="SPCC23B6.01c"/>
</dbReference>
<dbReference type="KEGG" id="spo:2539266"/>
<dbReference type="PomBase" id="SPCC23B6.01c"/>
<dbReference type="VEuPathDB" id="FungiDB:SPCC23B6.01c"/>
<dbReference type="eggNOG" id="KOG2210">
    <property type="taxonomic scope" value="Eukaryota"/>
</dbReference>
<dbReference type="HOGENOM" id="CLU_012334_4_2_1"/>
<dbReference type="InParanoid" id="Q9UUA1"/>
<dbReference type="OMA" id="RYDYPNG"/>
<dbReference type="Reactome" id="R-SPO-1482801">
    <property type="pathway name" value="Acyl chain remodelling of PS"/>
</dbReference>
<dbReference type="PRO" id="PR:Q9UUA1"/>
<dbReference type="Proteomes" id="UP000002485">
    <property type="component" value="Chromosome III"/>
</dbReference>
<dbReference type="GO" id="GO:0032541">
    <property type="term" value="C:cortical endoplasmic reticulum"/>
    <property type="evidence" value="ECO:0000318"/>
    <property type="project" value="GO_Central"/>
</dbReference>
<dbReference type="GO" id="GO:0005829">
    <property type="term" value="C:cytosol"/>
    <property type="evidence" value="ECO:0007005"/>
    <property type="project" value="PomBase"/>
</dbReference>
<dbReference type="GO" id="GO:0016020">
    <property type="term" value="C:membrane"/>
    <property type="evidence" value="ECO:0000318"/>
    <property type="project" value="GO_Central"/>
</dbReference>
<dbReference type="GO" id="GO:0005634">
    <property type="term" value="C:nucleus"/>
    <property type="evidence" value="ECO:0007005"/>
    <property type="project" value="PomBase"/>
</dbReference>
<dbReference type="GO" id="GO:0008142">
    <property type="term" value="F:oxysterol binding"/>
    <property type="evidence" value="ECO:0000266"/>
    <property type="project" value="PomBase"/>
</dbReference>
<dbReference type="GO" id="GO:0032934">
    <property type="term" value="F:sterol binding"/>
    <property type="evidence" value="ECO:0000318"/>
    <property type="project" value="GO_Central"/>
</dbReference>
<dbReference type="GO" id="GO:0120015">
    <property type="term" value="F:sterol transfer activity"/>
    <property type="evidence" value="ECO:0000266"/>
    <property type="project" value="PomBase"/>
</dbReference>
<dbReference type="GO" id="GO:0006897">
    <property type="term" value="P:endocytosis"/>
    <property type="evidence" value="ECO:0000318"/>
    <property type="project" value="GO_Central"/>
</dbReference>
<dbReference type="GO" id="GO:0006887">
    <property type="term" value="P:exocytosis"/>
    <property type="evidence" value="ECO:0000318"/>
    <property type="project" value="GO_Central"/>
</dbReference>
<dbReference type="GO" id="GO:0120009">
    <property type="term" value="P:intermembrane lipid transfer"/>
    <property type="evidence" value="ECO:0000305"/>
    <property type="project" value="PomBase"/>
</dbReference>
<dbReference type="GO" id="GO:0030011">
    <property type="term" value="P:maintenance of cell polarity"/>
    <property type="evidence" value="ECO:0000318"/>
    <property type="project" value="GO_Central"/>
</dbReference>
<dbReference type="GO" id="GO:0034727">
    <property type="term" value="P:piecemeal microautophagy of the nucleus"/>
    <property type="evidence" value="ECO:0000318"/>
    <property type="project" value="GO_Central"/>
</dbReference>
<dbReference type="GO" id="GO:0015918">
    <property type="term" value="P:sterol transport"/>
    <property type="evidence" value="ECO:0000266"/>
    <property type="project" value="PomBase"/>
</dbReference>
<dbReference type="FunFam" id="2.40.160.120:FF:000007">
    <property type="entry name" value="Oxysterol binding protein"/>
    <property type="match status" value="1"/>
</dbReference>
<dbReference type="FunFam" id="1.10.287.2720:FF:000001">
    <property type="entry name" value="Oxysterol-binding OBPalpha"/>
    <property type="match status" value="1"/>
</dbReference>
<dbReference type="Gene3D" id="1.10.287.2720">
    <property type="match status" value="1"/>
</dbReference>
<dbReference type="Gene3D" id="2.40.160.120">
    <property type="match status" value="1"/>
</dbReference>
<dbReference type="Gene3D" id="3.30.70.3490">
    <property type="match status" value="1"/>
</dbReference>
<dbReference type="InterPro" id="IPR037239">
    <property type="entry name" value="OSBP_sf"/>
</dbReference>
<dbReference type="InterPro" id="IPR000648">
    <property type="entry name" value="Oxysterol-bd"/>
</dbReference>
<dbReference type="InterPro" id="IPR018494">
    <property type="entry name" value="Oxysterol-bd_CS"/>
</dbReference>
<dbReference type="PANTHER" id="PTHR10972:SF102">
    <property type="entry name" value="OXYSTEROL-BINDING PROTEIN"/>
    <property type="match status" value="1"/>
</dbReference>
<dbReference type="PANTHER" id="PTHR10972">
    <property type="entry name" value="OXYSTEROL-BINDING PROTEIN-RELATED"/>
    <property type="match status" value="1"/>
</dbReference>
<dbReference type="Pfam" id="PF01237">
    <property type="entry name" value="Oxysterol_BP"/>
    <property type="match status" value="1"/>
</dbReference>
<dbReference type="SUPFAM" id="SSF144000">
    <property type="entry name" value="Oxysterol-binding protein-like"/>
    <property type="match status" value="1"/>
</dbReference>
<dbReference type="PROSITE" id="PS01013">
    <property type="entry name" value="OSBP"/>
    <property type="match status" value="1"/>
</dbReference>
<keyword id="KW-0963">Cytoplasm</keyword>
<keyword id="KW-0445">Lipid transport</keyword>
<keyword id="KW-0446">Lipid-binding</keyword>
<keyword id="KW-0539">Nucleus</keyword>
<keyword id="KW-0597">Phosphoprotein</keyword>
<keyword id="KW-1185">Reference proteome</keyword>
<keyword id="KW-0813">Transport</keyword>
<proteinExistence type="evidence at protein level"/>
<evidence type="ECO:0000256" key="1">
    <source>
        <dbReference type="SAM" id="MobiDB-lite"/>
    </source>
</evidence>
<evidence type="ECO:0000269" key="2">
    <source>
    </source>
</evidence>
<evidence type="ECO:0000269" key="3">
    <source>
    </source>
</evidence>
<evidence type="ECO:0000305" key="4"/>
<protein>
    <recommendedName>
        <fullName>Oxysterol-binding protein homolog C23B6.01c</fullName>
    </recommendedName>
</protein>
<sequence>MPHEKQDRDAEEIEDEGKNIILGIVSQLRPNMDLSKVTFPTFVLEPKSMLERITNFMSHPDLLLNVQKTADPEMRFLDVVRFYMSGWHIRPRGVKKPLNPILGETFTGFWKFPPSNSKDPNLQKLHGIAVYAAEQVCHHPPISAYFYLCPEYKVRIDGVVKPRSRFLGNSAASIMEGIASIKLQDLDEEYLITQPNVYARGILFGKMRLELGDHVTVRCPKTDLQADIEFKVKGFISGTYNSIAGKVKRVSTGEVLYKISGKWDSEMSVESVKTGETRPLLDVSKHDVYLVSARPLEEQGERESQRLWYKTCQAVIARDQTTATETKSAIEDRQREEAKQREIENVQWKPKYFKMIAPEEYILNFDIPNGKSDLEVLCALDEFIPIFSEVDRIAFHKFLSENTKPEDSSIHKHSRDASGDSTKGFAEHMPAPARRRRPQSTASFVTYRSDNGSVDEYHDAQLPDPNTLSKLHEEQDPAL</sequence>
<comment type="subcellular location">
    <subcellularLocation>
        <location evidence="2">Cytoplasm</location>
    </subcellularLocation>
    <subcellularLocation>
        <location evidence="2">Nucleus</location>
    </subcellularLocation>
</comment>
<comment type="similarity">
    <text evidence="4">Belongs to the OSBP family.</text>
</comment>
<organism>
    <name type="scientific">Schizosaccharomyces pombe (strain 972 / ATCC 24843)</name>
    <name type="common">Fission yeast</name>
    <dbReference type="NCBI Taxonomy" id="284812"/>
    <lineage>
        <taxon>Eukaryota</taxon>
        <taxon>Fungi</taxon>
        <taxon>Dikarya</taxon>
        <taxon>Ascomycota</taxon>
        <taxon>Taphrinomycotina</taxon>
        <taxon>Schizosaccharomycetes</taxon>
        <taxon>Schizosaccharomycetales</taxon>
        <taxon>Schizosaccharomycetaceae</taxon>
        <taxon>Schizosaccharomyces</taxon>
    </lineage>
</organism>